<gene>
    <name evidence="1" type="primary">miaB</name>
    <name type="ordered locus">RPC_0468</name>
</gene>
<accession>Q21C43</accession>
<comment type="function">
    <text evidence="1">Catalyzes the methylthiolation of N6-(dimethylallyl)adenosine (i(6)A), leading to the formation of 2-methylthio-N6-(dimethylallyl)adenosine (ms(2)i(6)A) at position 37 in tRNAs that read codons beginning with uridine.</text>
</comment>
<comment type="catalytic activity">
    <reaction evidence="1">
        <text>N(6)-dimethylallyladenosine(37) in tRNA + (sulfur carrier)-SH + AH2 + 2 S-adenosyl-L-methionine = 2-methylsulfanyl-N(6)-dimethylallyladenosine(37) in tRNA + (sulfur carrier)-H + 5'-deoxyadenosine + L-methionine + A + S-adenosyl-L-homocysteine + 2 H(+)</text>
        <dbReference type="Rhea" id="RHEA:37067"/>
        <dbReference type="Rhea" id="RHEA-COMP:10375"/>
        <dbReference type="Rhea" id="RHEA-COMP:10376"/>
        <dbReference type="Rhea" id="RHEA-COMP:14737"/>
        <dbReference type="Rhea" id="RHEA-COMP:14739"/>
        <dbReference type="ChEBI" id="CHEBI:13193"/>
        <dbReference type="ChEBI" id="CHEBI:15378"/>
        <dbReference type="ChEBI" id="CHEBI:17319"/>
        <dbReference type="ChEBI" id="CHEBI:17499"/>
        <dbReference type="ChEBI" id="CHEBI:29917"/>
        <dbReference type="ChEBI" id="CHEBI:57844"/>
        <dbReference type="ChEBI" id="CHEBI:57856"/>
        <dbReference type="ChEBI" id="CHEBI:59789"/>
        <dbReference type="ChEBI" id="CHEBI:64428"/>
        <dbReference type="ChEBI" id="CHEBI:74415"/>
        <dbReference type="ChEBI" id="CHEBI:74417"/>
        <dbReference type="EC" id="2.8.4.3"/>
    </reaction>
</comment>
<comment type="cofactor">
    <cofactor evidence="1">
        <name>[4Fe-4S] cluster</name>
        <dbReference type="ChEBI" id="CHEBI:49883"/>
    </cofactor>
    <text evidence="1">Binds 2 [4Fe-4S] clusters. One cluster is coordinated with 3 cysteines and an exchangeable S-adenosyl-L-methionine.</text>
</comment>
<comment type="subunit">
    <text evidence="1">Monomer.</text>
</comment>
<comment type="subcellular location">
    <subcellularLocation>
        <location evidence="1">Cytoplasm</location>
    </subcellularLocation>
</comment>
<comment type="similarity">
    <text evidence="1">Belongs to the methylthiotransferase family. MiaB subfamily.</text>
</comment>
<organism>
    <name type="scientific">Rhodopseudomonas palustris (strain BisB18)</name>
    <dbReference type="NCBI Taxonomy" id="316056"/>
    <lineage>
        <taxon>Bacteria</taxon>
        <taxon>Pseudomonadati</taxon>
        <taxon>Pseudomonadota</taxon>
        <taxon>Alphaproteobacteria</taxon>
        <taxon>Hyphomicrobiales</taxon>
        <taxon>Nitrobacteraceae</taxon>
        <taxon>Rhodopseudomonas</taxon>
    </lineage>
</organism>
<protein>
    <recommendedName>
        <fullName evidence="1">tRNA-2-methylthio-N(6)-dimethylallyladenosine synthase</fullName>
        <ecNumber evidence="1">2.8.4.3</ecNumber>
    </recommendedName>
    <alternativeName>
        <fullName evidence="1">(Dimethylallyl)adenosine tRNA methylthiotransferase MiaB</fullName>
    </alternativeName>
    <alternativeName>
        <fullName evidence="1">tRNA-i(6)A37 methylthiotransferase</fullName>
    </alternativeName>
</protein>
<proteinExistence type="inferred from homology"/>
<evidence type="ECO:0000255" key="1">
    <source>
        <dbReference type="HAMAP-Rule" id="MF_01864"/>
    </source>
</evidence>
<evidence type="ECO:0000255" key="2">
    <source>
        <dbReference type="PROSITE-ProRule" id="PRU01266"/>
    </source>
</evidence>
<evidence type="ECO:0000256" key="3">
    <source>
        <dbReference type="SAM" id="MobiDB-lite"/>
    </source>
</evidence>
<dbReference type="EC" id="2.8.4.3" evidence="1"/>
<dbReference type="EMBL" id="CP000301">
    <property type="protein sequence ID" value="ABD86043.1"/>
    <property type="molecule type" value="Genomic_DNA"/>
</dbReference>
<dbReference type="SMR" id="Q21C43"/>
<dbReference type="STRING" id="316056.RPC_0468"/>
<dbReference type="KEGG" id="rpc:RPC_0468"/>
<dbReference type="eggNOG" id="COG0621">
    <property type="taxonomic scope" value="Bacteria"/>
</dbReference>
<dbReference type="HOGENOM" id="CLU_018697_2_0_5"/>
<dbReference type="OrthoDB" id="9805215at2"/>
<dbReference type="GO" id="GO:0005829">
    <property type="term" value="C:cytosol"/>
    <property type="evidence" value="ECO:0007669"/>
    <property type="project" value="TreeGrafter"/>
</dbReference>
<dbReference type="GO" id="GO:0051539">
    <property type="term" value="F:4 iron, 4 sulfur cluster binding"/>
    <property type="evidence" value="ECO:0007669"/>
    <property type="project" value="UniProtKB-UniRule"/>
</dbReference>
<dbReference type="GO" id="GO:0046872">
    <property type="term" value="F:metal ion binding"/>
    <property type="evidence" value="ECO:0007669"/>
    <property type="project" value="UniProtKB-KW"/>
</dbReference>
<dbReference type="GO" id="GO:0035597">
    <property type="term" value="F:N6-isopentenyladenosine methylthiotransferase activity"/>
    <property type="evidence" value="ECO:0007669"/>
    <property type="project" value="TreeGrafter"/>
</dbReference>
<dbReference type="CDD" id="cd01335">
    <property type="entry name" value="Radical_SAM"/>
    <property type="match status" value="1"/>
</dbReference>
<dbReference type="FunFam" id="3.40.50.12160:FF:000003">
    <property type="entry name" value="CDK5 regulatory subunit-associated protein 1"/>
    <property type="match status" value="1"/>
</dbReference>
<dbReference type="FunFam" id="3.80.30.20:FF:000001">
    <property type="entry name" value="tRNA-2-methylthio-N(6)-dimethylallyladenosine synthase 2"/>
    <property type="match status" value="1"/>
</dbReference>
<dbReference type="Gene3D" id="3.40.50.12160">
    <property type="entry name" value="Methylthiotransferase, N-terminal domain"/>
    <property type="match status" value="1"/>
</dbReference>
<dbReference type="Gene3D" id="3.80.30.20">
    <property type="entry name" value="tm_1862 like domain"/>
    <property type="match status" value="1"/>
</dbReference>
<dbReference type="HAMAP" id="MF_01864">
    <property type="entry name" value="tRNA_metthiotr_MiaB"/>
    <property type="match status" value="1"/>
</dbReference>
<dbReference type="InterPro" id="IPR006638">
    <property type="entry name" value="Elp3/MiaA/NifB-like_rSAM"/>
</dbReference>
<dbReference type="InterPro" id="IPR005839">
    <property type="entry name" value="Methylthiotransferase"/>
</dbReference>
<dbReference type="InterPro" id="IPR020612">
    <property type="entry name" value="Methylthiotransferase_CS"/>
</dbReference>
<dbReference type="InterPro" id="IPR013848">
    <property type="entry name" value="Methylthiotransferase_N"/>
</dbReference>
<dbReference type="InterPro" id="IPR038135">
    <property type="entry name" value="Methylthiotransferase_N_sf"/>
</dbReference>
<dbReference type="InterPro" id="IPR006463">
    <property type="entry name" value="MiaB_methiolase"/>
</dbReference>
<dbReference type="InterPro" id="IPR007197">
    <property type="entry name" value="rSAM"/>
</dbReference>
<dbReference type="InterPro" id="IPR023404">
    <property type="entry name" value="rSAM_horseshoe"/>
</dbReference>
<dbReference type="InterPro" id="IPR002792">
    <property type="entry name" value="TRAM_dom"/>
</dbReference>
<dbReference type="NCBIfam" id="TIGR01574">
    <property type="entry name" value="miaB-methiolase"/>
    <property type="match status" value="1"/>
</dbReference>
<dbReference type="NCBIfam" id="TIGR00089">
    <property type="entry name" value="MiaB/RimO family radical SAM methylthiotransferase"/>
    <property type="match status" value="1"/>
</dbReference>
<dbReference type="PANTHER" id="PTHR43020">
    <property type="entry name" value="CDK5 REGULATORY SUBUNIT-ASSOCIATED PROTEIN 1"/>
    <property type="match status" value="1"/>
</dbReference>
<dbReference type="PANTHER" id="PTHR43020:SF2">
    <property type="entry name" value="MITOCHONDRIAL TRNA METHYLTHIOTRANSFERASE CDK5RAP1"/>
    <property type="match status" value="1"/>
</dbReference>
<dbReference type="Pfam" id="PF04055">
    <property type="entry name" value="Radical_SAM"/>
    <property type="match status" value="1"/>
</dbReference>
<dbReference type="Pfam" id="PF01938">
    <property type="entry name" value="TRAM"/>
    <property type="match status" value="1"/>
</dbReference>
<dbReference type="Pfam" id="PF00919">
    <property type="entry name" value="UPF0004"/>
    <property type="match status" value="1"/>
</dbReference>
<dbReference type="SFLD" id="SFLDF00273">
    <property type="entry name" value="(dimethylallyl)adenosine_tRNA"/>
    <property type="match status" value="1"/>
</dbReference>
<dbReference type="SFLD" id="SFLDG01082">
    <property type="entry name" value="B12-binding_domain_containing"/>
    <property type="match status" value="1"/>
</dbReference>
<dbReference type="SFLD" id="SFLDS00029">
    <property type="entry name" value="Radical_SAM"/>
    <property type="match status" value="1"/>
</dbReference>
<dbReference type="SMART" id="SM00729">
    <property type="entry name" value="Elp3"/>
    <property type="match status" value="1"/>
</dbReference>
<dbReference type="SUPFAM" id="SSF102114">
    <property type="entry name" value="Radical SAM enzymes"/>
    <property type="match status" value="1"/>
</dbReference>
<dbReference type="PROSITE" id="PS51449">
    <property type="entry name" value="MTTASE_N"/>
    <property type="match status" value="1"/>
</dbReference>
<dbReference type="PROSITE" id="PS01278">
    <property type="entry name" value="MTTASE_RADICAL"/>
    <property type="match status" value="1"/>
</dbReference>
<dbReference type="PROSITE" id="PS51918">
    <property type="entry name" value="RADICAL_SAM"/>
    <property type="match status" value="1"/>
</dbReference>
<dbReference type="PROSITE" id="PS50926">
    <property type="entry name" value="TRAM"/>
    <property type="match status" value="1"/>
</dbReference>
<feature type="chain" id="PRO_0000374495" description="tRNA-2-methylthio-N(6)-dimethylallyladenosine synthase">
    <location>
        <begin position="1"/>
        <end position="473"/>
    </location>
</feature>
<feature type="domain" description="MTTase N-terminal" evidence="1">
    <location>
        <begin position="5"/>
        <end position="125"/>
    </location>
</feature>
<feature type="domain" description="Radical SAM core" evidence="2">
    <location>
        <begin position="152"/>
        <end position="384"/>
    </location>
</feature>
<feature type="domain" description="TRAM" evidence="1">
    <location>
        <begin position="387"/>
        <end position="449"/>
    </location>
</feature>
<feature type="region of interest" description="Disordered" evidence="3">
    <location>
        <begin position="452"/>
        <end position="473"/>
    </location>
</feature>
<feature type="binding site" evidence="1">
    <location>
        <position position="14"/>
    </location>
    <ligand>
        <name>[4Fe-4S] cluster</name>
        <dbReference type="ChEBI" id="CHEBI:49883"/>
        <label>1</label>
    </ligand>
</feature>
<feature type="binding site" evidence="1">
    <location>
        <position position="50"/>
    </location>
    <ligand>
        <name>[4Fe-4S] cluster</name>
        <dbReference type="ChEBI" id="CHEBI:49883"/>
        <label>1</label>
    </ligand>
</feature>
<feature type="binding site" evidence="1">
    <location>
        <position position="88"/>
    </location>
    <ligand>
        <name>[4Fe-4S] cluster</name>
        <dbReference type="ChEBI" id="CHEBI:49883"/>
        <label>1</label>
    </ligand>
</feature>
<feature type="binding site" evidence="1">
    <location>
        <position position="166"/>
    </location>
    <ligand>
        <name>[4Fe-4S] cluster</name>
        <dbReference type="ChEBI" id="CHEBI:49883"/>
        <label>2</label>
        <note>4Fe-4S-S-AdoMet</note>
    </ligand>
</feature>
<feature type="binding site" evidence="1">
    <location>
        <position position="170"/>
    </location>
    <ligand>
        <name>[4Fe-4S] cluster</name>
        <dbReference type="ChEBI" id="CHEBI:49883"/>
        <label>2</label>
        <note>4Fe-4S-S-AdoMet</note>
    </ligand>
</feature>
<feature type="binding site" evidence="1">
    <location>
        <position position="173"/>
    </location>
    <ligand>
        <name>[4Fe-4S] cluster</name>
        <dbReference type="ChEBI" id="CHEBI:49883"/>
        <label>2</label>
        <note>4Fe-4S-S-AdoMet</note>
    </ligand>
</feature>
<reference key="1">
    <citation type="submission" date="2006-03" db="EMBL/GenBank/DDBJ databases">
        <title>Complete sequence of Rhodopseudomonas palustris BisB18.</title>
        <authorList>
            <consortium name="US DOE Joint Genome Institute"/>
            <person name="Copeland A."/>
            <person name="Lucas S."/>
            <person name="Lapidus A."/>
            <person name="Barry K."/>
            <person name="Detter J.C."/>
            <person name="Glavina del Rio T."/>
            <person name="Hammon N."/>
            <person name="Israni S."/>
            <person name="Dalin E."/>
            <person name="Tice H."/>
            <person name="Pitluck S."/>
            <person name="Chain P."/>
            <person name="Malfatti S."/>
            <person name="Shin M."/>
            <person name="Vergez L."/>
            <person name="Schmutz J."/>
            <person name="Larimer F."/>
            <person name="Land M."/>
            <person name="Hauser L."/>
            <person name="Pelletier D.A."/>
            <person name="Kyrpides N."/>
            <person name="Anderson I."/>
            <person name="Oda Y."/>
            <person name="Harwood C.S."/>
            <person name="Richardson P."/>
        </authorList>
    </citation>
    <scope>NUCLEOTIDE SEQUENCE [LARGE SCALE GENOMIC DNA]</scope>
    <source>
        <strain>BisB18</strain>
    </source>
</reference>
<name>MIAB_RHOPB</name>
<sequence length="473" mass="51497">MTQPRKLHIKSFGCQMNVYDAQRMVDALAPEGFVETANADEADLVILNTCHIREKASEKVYSELGRLRVAKDEAALQGRRMNIAVAGCVAQAEGAEIIRRQPAVDVVVGPQSYHHLPQLLAEAARGGRALETEFPVDDKFGFLPPPQPDAIRARGISAFVTVQEGCDKFCTFCVVPYTRGAEVSRPVDKIVEDVRRLADNGVREITLIGQNVNAYHGDGPDGRPWPLGALLHHLAKIPGIVRLRYSTSHPRDVDQSLIDAHRDLPALMPFVHLPVQSGSDAILAAMNRKHSADDYRRLVDRFRSANPAIAFSSDFIVGFPGETDEDFAATLALVTQIGYAGAYSFKYSPRPGTPAAELQETVSAAVMDERLVRLQELIDSQQAAFNAAVIGTTVEVLFERAARNPGQIVGRTAYLQPAHVMAAPDIIGQVLPVRIDSLERYSLIGELAAPQQHSGFATRSEDSPQSLPITTGA</sequence>
<keyword id="KW-0004">4Fe-4S</keyword>
<keyword id="KW-0963">Cytoplasm</keyword>
<keyword id="KW-0408">Iron</keyword>
<keyword id="KW-0411">Iron-sulfur</keyword>
<keyword id="KW-0479">Metal-binding</keyword>
<keyword id="KW-0949">S-adenosyl-L-methionine</keyword>
<keyword id="KW-0808">Transferase</keyword>
<keyword id="KW-0819">tRNA processing</keyword>